<reference key="1">
    <citation type="journal article" date="2005" name="J. Bacteriol.">
        <title>Insights on evolution of virulence and resistance from the complete genome analysis of an early methicillin-resistant Staphylococcus aureus strain and a biofilm-producing methicillin-resistant Staphylococcus epidermidis strain.</title>
        <authorList>
            <person name="Gill S.R."/>
            <person name="Fouts D.E."/>
            <person name="Archer G.L."/>
            <person name="Mongodin E.F."/>
            <person name="DeBoy R.T."/>
            <person name="Ravel J."/>
            <person name="Paulsen I.T."/>
            <person name="Kolonay J.F."/>
            <person name="Brinkac L.M."/>
            <person name="Beanan M.J."/>
            <person name="Dodson R.J."/>
            <person name="Daugherty S.C."/>
            <person name="Madupu R."/>
            <person name="Angiuoli S.V."/>
            <person name="Durkin A.S."/>
            <person name="Haft D.H."/>
            <person name="Vamathevan J.J."/>
            <person name="Khouri H."/>
            <person name="Utterback T.R."/>
            <person name="Lee C."/>
            <person name="Dimitrov G."/>
            <person name="Jiang L."/>
            <person name="Qin H."/>
            <person name="Weidman J."/>
            <person name="Tran K."/>
            <person name="Kang K.H."/>
            <person name="Hance I.R."/>
            <person name="Nelson K.E."/>
            <person name="Fraser C.M."/>
        </authorList>
    </citation>
    <scope>NUCLEOTIDE SEQUENCE [LARGE SCALE GENOMIC DNA]</scope>
    <source>
        <strain>ATCC 35984 / DSM 28319 / BCRC 17069 / CCUG 31568 / BM 3577 / RP62A</strain>
    </source>
</reference>
<organism>
    <name type="scientific">Staphylococcus epidermidis (strain ATCC 35984 / DSM 28319 / BCRC 17069 / CCUG 31568 / BM 3577 / RP62A)</name>
    <dbReference type="NCBI Taxonomy" id="176279"/>
    <lineage>
        <taxon>Bacteria</taxon>
        <taxon>Bacillati</taxon>
        <taxon>Bacillota</taxon>
        <taxon>Bacilli</taxon>
        <taxon>Bacillales</taxon>
        <taxon>Staphylococcaceae</taxon>
        <taxon>Staphylococcus</taxon>
    </lineage>
</organism>
<protein>
    <recommendedName>
        <fullName>Putative hemin transport system permease protein HrtB</fullName>
    </recommendedName>
</protein>
<dbReference type="EMBL" id="CP000029">
    <property type="protein sequence ID" value="AAW52834.1"/>
    <property type="molecule type" value="Genomic_DNA"/>
</dbReference>
<dbReference type="RefSeq" id="WP_001831464.1">
    <property type="nucleotide sequence ID" value="NC_002976.3"/>
</dbReference>
<dbReference type="SMR" id="Q5HLN3"/>
<dbReference type="STRING" id="176279.SERP1952"/>
<dbReference type="KEGG" id="ser:SERP1952"/>
<dbReference type="eggNOG" id="COG0577">
    <property type="taxonomic scope" value="Bacteria"/>
</dbReference>
<dbReference type="HOGENOM" id="CLU_060907_1_0_9"/>
<dbReference type="Proteomes" id="UP000000531">
    <property type="component" value="Chromosome"/>
</dbReference>
<dbReference type="GO" id="GO:0005886">
    <property type="term" value="C:plasma membrane"/>
    <property type="evidence" value="ECO:0007669"/>
    <property type="project" value="UniProtKB-SubCell"/>
</dbReference>
<dbReference type="InterPro" id="IPR051125">
    <property type="entry name" value="ABC-4/HrtB_transporter"/>
</dbReference>
<dbReference type="InterPro" id="IPR003838">
    <property type="entry name" value="ABC3_permease_C"/>
</dbReference>
<dbReference type="PANTHER" id="PTHR43738">
    <property type="entry name" value="ABC TRANSPORTER, MEMBRANE PROTEIN"/>
    <property type="match status" value="1"/>
</dbReference>
<dbReference type="PANTHER" id="PTHR43738:SF1">
    <property type="entry name" value="HEMIN TRANSPORT SYSTEM PERMEASE PROTEIN HRTB-RELATED"/>
    <property type="match status" value="1"/>
</dbReference>
<dbReference type="Pfam" id="PF02687">
    <property type="entry name" value="FtsX"/>
    <property type="match status" value="1"/>
</dbReference>
<evidence type="ECO:0000250" key="1"/>
<evidence type="ECO:0000255" key="2"/>
<evidence type="ECO:0000305" key="3"/>
<comment type="function">
    <text evidence="1">Part of the ABC transporter complex hrt involved in hemin import. Responsible for the translocation of the substrate across the membrane (By similarity).</text>
</comment>
<comment type="subunit">
    <text evidence="1">The complex is composed of two ATP-binding proteins (HrtA), two transmembrane proteins (HrtB) and a solute-binding protein.</text>
</comment>
<comment type="subcellular location">
    <subcellularLocation>
        <location evidence="3">Cell membrane</location>
        <topology evidence="3">Multi-pass membrane protein</topology>
    </subcellularLocation>
</comment>
<comment type="similarity">
    <text evidence="3">Belongs to the ABC-4 integral membrane protein family. HrtB subfamily.</text>
</comment>
<sequence>MNLAWKEIKFYKFRFILIMFIIFLMAIMVLFISGLAQGLARENISIFDQIKGNQFVVQKMKEPQLEKSILSRSKQDNISKIIDEKPFKMAGKTFKINGNEENVMAINSVKNHQPNLKSGHYPKNGNQIAINEKLTAEGLYLDDKVKVKGDDTTYKVVGILKNTMYSHSNIVMMDQSKIEQSSNVATFYVTNQLSKSDKNKINHIKGVQTATTDNITSNIASYKAEQTPLDMMIISLYIITAIVLSAFFYVMTIQKTSEIGILKAIGITTKHLLTSLILQISMITFIGVAIAEVVILLISQILPVSMPFHIDMHNIIIVLVIFMIVGLIGTSLSFIKLIKIDPIEAIGGGQ</sequence>
<name>HRTB_STAEQ</name>
<keyword id="KW-1003">Cell membrane</keyword>
<keyword id="KW-0472">Membrane</keyword>
<keyword id="KW-1185">Reference proteome</keyword>
<keyword id="KW-0812">Transmembrane</keyword>
<keyword id="KW-1133">Transmembrane helix</keyword>
<keyword id="KW-0813">Transport</keyword>
<accession>Q5HLN3</accession>
<gene>
    <name type="primary">hrtB</name>
    <name type="ordered locus">SERP1952</name>
</gene>
<proteinExistence type="inferred from homology"/>
<feature type="chain" id="PRO_0000270529" description="Putative hemin transport system permease protein HrtB">
    <location>
        <begin position="1"/>
        <end position="350"/>
    </location>
</feature>
<feature type="transmembrane region" description="Helical" evidence="2">
    <location>
        <begin position="15"/>
        <end position="35"/>
    </location>
</feature>
<feature type="transmembrane region" description="Helical" evidence="2">
    <location>
        <begin position="233"/>
        <end position="253"/>
    </location>
</feature>
<feature type="transmembrane region" description="Helical" evidence="2">
    <location>
        <begin position="276"/>
        <end position="296"/>
    </location>
</feature>
<feature type="transmembrane region" description="Helical" evidence="2">
    <location>
        <begin position="315"/>
        <end position="335"/>
    </location>
</feature>